<keyword id="KW-1165">Clathrin-mediated endocytosis of virus by host</keyword>
<keyword id="KW-1015">Disulfide bond</keyword>
<keyword id="KW-1170">Fusion of virus membrane with host endosomal membrane</keyword>
<keyword id="KW-1168">Fusion of virus membrane with host membrane</keyword>
<keyword id="KW-0325">Glycoprotein</keyword>
<keyword id="KW-1043">Host membrane</keyword>
<keyword id="KW-0945">Host-virus interaction</keyword>
<keyword id="KW-0449">Lipoprotein</keyword>
<keyword id="KW-0472">Membrane</keyword>
<keyword id="KW-0564">Palmitate</keyword>
<keyword id="KW-1185">Reference proteome</keyword>
<keyword id="KW-0732">Signal</keyword>
<keyword id="KW-0812">Transmembrane</keyword>
<keyword id="KW-1133">Transmembrane helix</keyword>
<keyword id="KW-1161">Viral attachment to host cell</keyword>
<keyword id="KW-0261">Viral envelope protein</keyword>
<keyword id="KW-1162">Viral penetration into host cytoplasm</keyword>
<keyword id="KW-0946">Virion</keyword>
<keyword id="KW-1164">Virus endocytosis by host</keyword>
<keyword id="KW-1160">Virus entry into host cell</keyword>
<evidence type="ECO:0000250" key="1"/>
<evidence type="ECO:0000250" key="2">
    <source>
        <dbReference type="UniProtKB" id="P03522"/>
    </source>
</evidence>
<evidence type="ECO:0000255" key="3"/>
<evidence type="ECO:0000305" key="4"/>
<dbReference type="EMBL" id="AJ318079">
    <property type="protein sequence ID" value="CAC51336.1"/>
    <property type="molecule type" value="Genomic_RNA"/>
</dbReference>
<dbReference type="SMR" id="Q91DS0"/>
<dbReference type="GlyCosmos" id="Q91DS0">
    <property type="glycosylation" value="5 sites, No reported glycans"/>
</dbReference>
<dbReference type="Proteomes" id="UP000007541">
    <property type="component" value="Genome"/>
</dbReference>
<dbReference type="GO" id="GO:0033644">
    <property type="term" value="C:host cell membrane"/>
    <property type="evidence" value="ECO:0007669"/>
    <property type="project" value="UniProtKB-SubCell"/>
</dbReference>
<dbReference type="GO" id="GO:0016020">
    <property type="term" value="C:membrane"/>
    <property type="evidence" value="ECO:0007669"/>
    <property type="project" value="UniProtKB-KW"/>
</dbReference>
<dbReference type="GO" id="GO:0019031">
    <property type="term" value="C:viral envelope"/>
    <property type="evidence" value="ECO:0007669"/>
    <property type="project" value="UniProtKB-KW"/>
</dbReference>
<dbReference type="GO" id="GO:0055036">
    <property type="term" value="C:virion membrane"/>
    <property type="evidence" value="ECO:0007669"/>
    <property type="project" value="UniProtKB-SubCell"/>
</dbReference>
<dbReference type="GO" id="GO:0075512">
    <property type="term" value="P:clathrin-dependent endocytosis of virus by host cell"/>
    <property type="evidence" value="ECO:0007669"/>
    <property type="project" value="UniProtKB-KW"/>
</dbReference>
<dbReference type="GO" id="GO:0039654">
    <property type="term" value="P:fusion of virus membrane with host endosome membrane"/>
    <property type="evidence" value="ECO:0007669"/>
    <property type="project" value="UniProtKB-KW"/>
</dbReference>
<dbReference type="GO" id="GO:0019062">
    <property type="term" value="P:virion attachment to host cell"/>
    <property type="evidence" value="ECO:0007669"/>
    <property type="project" value="UniProtKB-KW"/>
</dbReference>
<dbReference type="Gene3D" id="2.30.29.130">
    <property type="match status" value="1"/>
</dbReference>
<dbReference type="Gene3D" id="2.30.30.640">
    <property type="match status" value="1"/>
</dbReference>
<dbReference type="InterPro" id="IPR055447">
    <property type="entry name" value="Rhabdo_glycop_CD"/>
</dbReference>
<dbReference type="InterPro" id="IPR001903">
    <property type="entry name" value="Rhabdo_glycop_FD"/>
</dbReference>
<dbReference type="Pfam" id="PF24833">
    <property type="entry name" value="Rhabdo_glycop_CD"/>
    <property type="match status" value="1"/>
</dbReference>
<dbReference type="Pfam" id="PF00974">
    <property type="entry name" value="Rhabdo_glycop_FD"/>
    <property type="match status" value="1"/>
</dbReference>
<dbReference type="SUPFAM" id="SSF161008">
    <property type="entry name" value="Viral glycoprotein ectodomain-like"/>
    <property type="match status" value="1"/>
</dbReference>
<feature type="signal peptide" evidence="3">
    <location>
        <begin position="1"/>
        <end position="18"/>
    </location>
</feature>
<feature type="chain" id="PRO_0000287249" description="Glycoprotein">
    <location>
        <begin position="19"/>
        <end position="509"/>
    </location>
</feature>
<feature type="topological domain" description="Virion surface" evidence="3">
    <location>
        <begin position="19"/>
        <end position="461"/>
    </location>
</feature>
<feature type="transmembrane region" description="Helical" evidence="3">
    <location>
        <begin position="462"/>
        <end position="482"/>
    </location>
</feature>
<feature type="topological domain" description="Intravirion" evidence="3">
    <location>
        <begin position="483"/>
        <end position="509"/>
    </location>
</feature>
<feature type="short sequence motif" description="basolateral targeting ex vivo" evidence="2">
    <location>
        <begin position="496"/>
        <end position="505"/>
    </location>
</feature>
<feature type="lipid moiety-binding region" description="S-palmitoyl cysteine; by host" evidence="1">
    <location>
        <position position="488"/>
    </location>
</feature>
<feature type="glycosylation site" description="N-linked (GlcNAc...) asparagine; by host" evidence="3">
    <location>
        <position position="28"/>
    </location>
</feature>
<feature type="glycosylation site" description="N-linked (GlcNAc...) asparagine; by host" evidence="3">
    <location>
        <position position="181"/>
    </location>
</feature>
<feature type="glycosylation site" description="N-linked (GlcNAc...) asparagine; by host" evidence="3">
    <location>
        <position position="338"/>
    </location>
</feature>
<feature type="glycosylation site" description="N-linked (GlcNAc...) asparagine; by host" evidence="3">
    <location>
        <position position="362"/>
    </location>
</feature>
<feature type="glycosylation site" description="N-linked (GlcNAc...) asparagine; by host" evidence="3">
    <location>
        <position position="369"/>
    </location>
</feature>
<feature type="disulfide bond" evidence="1">
    <location>
        <begin position="42"/>
        <end position="302"/>
    </location>
</feature>
<feature type="disulfide bond" evidence="1">
    <location>
        <begin position="77"/>
        <end position="110"/>
    </location>
</feature>
<feature type="disulfide bond" evidence="1">
    <location>
        <begin position="86"/>
        <end position="132"/>
    </location>
</feature>
<feature type="disulfide bond" evidence="1">
    <location>
        <begin position="171"/>
        <end position="176"/>
    </location>
</feature>
<feature type="disulfide bond" evidence="1">
    <location>
        <begin position="195"/>
        <end position="241"/>
    </location>
</feature>
<feature type="disulfide bond" evidence="1">
    <location>
        <begin position="236"/>
        <end position="271"/>
    </location>
</feature>
<comment type="function">
    <text evidence="2">Attaches the virus to host receptors, inducing clathrin-dependent endocytosis of the virion.</text>
</comment>
<comment type="function">
    <text evidence="2">In the endosome, the acidic pH induces conformational changes in the glycoprotein trimer, which trigger fusion between virus and endosomal membrane.</text>
</comment>
<comment type="subunit">
    <text evidence="2">Homotrimer.</text>
</comment>
<comment type="subcellular location">
    <subcellularLocation>
        <location evidence="2">Virion membrane</location>
        <topology evidence="2">Single-pass type I membrane protein</topology>
    </subcellularLocation>
    <subcellularLocation>
        <location evidence="2">Host membrane</location>
        <topology evidence="2">Single-pass type I membrane protein</topology>
    </subcellularLocation>
    <text evidence="2">The cytoplasmic domain sorts the protein to neurons dentrites instead of axons. When expressed in ex vivo polarized cells like epithelial cells, it sorts the protein to the basolateral side.</text>
</comment>
<comment type="PTM">
    <text evidence="2">Glycosylated by host.</text>
</comment>
<comment type="similarity">
    <text evidence="4">Belongs to the vesiculovirus glycoprotein family.</text>
</comment>
<sequence length="509" mass="57443">MSIISYIAFLLLIDSNLGIPIFVPSGRNISWQPVIQPFDYQCPIHGNLPNTMGLSATKLTIKSPSVFSTDKVSGWICHAAEWKTTCDYRWYGPQYITHSIHPISPTIDECRRIIQRIASGTDEDLGFPPQSCGWASVTTVSNTNYRVVPHSVHLEPYGGHWIDHEFNGGECREKVCEMKGNHSIWITEETVQHECAKHIEEVEGIMYGNVPRGDVMYANNFIIDRHHRVYRFGGSCQMKFCNKDGIKFARGDWVEKTAGTLTTIHDNVPKCVDGTLVSGHRPGLDLIDTVFNLENVVEYTLCEGTKRKINKQEKLTSVDLSYLAPRIGGFGSVFRVRNGTLERGSTTYIRIEVEGPIVDSLNGTDPRTNASRVFWDDWELDGNIYQGFNGVYKGKDGKIHIPLNMIESGIIDDELQHAFQTDIIPHPHYDDDEIREDDIFFDNTGENGNPVDAVVEWVSGWGTSLKFFGMTLVALILIFLLIRCCVACTYLMKRSKRPATESHEMRSLV</sequence>
<organism>
    <name type="scientific">Spring viremia of carp virus</name>
    <name type="common">Rhabdovirus carpia</name>
    <dbReference type="NCBI Taxonomy" id="696863"/>
    <lineage>
        <taxon>Viruses</taxon>
        <taxon>Riboviria</taxon>
        <taxon>Orthornavirae</taxon>
        <taxon>Negarnaviricota</taxon>
        <taxon>Haploviricotina</taxon>
        <taxon>Monjiviricetes</taxon>
        <taxon>Mononegavirales</taxon>
        <taxon>Rhabdoviridae</taxon>
        <taxon>Alpharhabdovirinae</taxon>
        <taxon>Sprivivirus</taxon>
    </lineage>
</organism>
<accession>Q91DS0</accession>
<name>GLYCO_SVCV</name>
<proteinExistence type="inferred from homology"/>
<organismHost>
    <name type="scientific">Cyprinus carpio</name>
    <name type="common">Common carp</name>
    <dbReference type="NCBI Taxonomy" id="7962"/>
</organismHost>
<reference key="1">
    <citation type="journal article" date="2002" name="Virus Res.">
        <title>Determination of the complete genomic sequence and analysis of the gene products of the virus of Spring Viremia of Carp, a fish rhabdovirus.</title>
        <authorList>
            <person name="Hoffmann B."/>
            <person name="Schutze H."/>
            <person name="Mettenleiter T.C."/>
        </authorList>
    </citation>
    <scope>NUCLEOTIDE SEQUENCE [GENOMIC RNA]</scope>
    <source>
        <strain>Fijan reference</strain>
    </source>
</reference>
<protein>
    <recommendedName>
        <fullName>Glycoprotein</fullName>
    </recommendedName>
</protein>
<gene>
    <name type="primary">G</name>
</gene>